<proteinExistence type="evidence at protein level"/>
<name>NGIF_RAT</name>
<protein>
    <recommendedName>
        <fullName>Non-arginase growth inhibitory factor</fullName>
        <shortName>NAGIF</shortName>
    </recommendedName>
</protein>
<accession>P82598</accession>
<organism>
    <name type="scientific">Rattus norvegicus</name>
    <name type="common">Rat</name>
    <dbReference type="NCBI Taxonomy" id="10116"/>
    <lineage>
        <taxon>Eukaryota</taxon>
        <taxon>Metazoa</taxon>
        <taxon>Chordata</taxon>
        <taxon>Craniata</taxon>
        <taxon>Vertebrata</taxon>
        <taxon>Euteleostomi</taxon>
        <taxon>Mammalia</taxon>
        <taxon>Eutheria</taxon>
        <taxon>Euarchontoglires</taxon>
        <taxon>Glires</taxon>
        <taxon>Rodentia</taxon>
        <taxon>Myomorpha</taxon>
        <taxon>Muroidea</taxon>
        <taxon>Muridae</taxon>
        <taxon>Murinae</taxon>
        <taxon>Rattus</taxon>
    </lineage>
</organism>
<feature type="chain" id="PRO_0000096798" description="Non-arginase growth inhibitory factor">
    <location>
        <begin position="1"/>
        <end position="8" status="greater than"/>
    </location>
</feature>
<feature type="non-terminal residue" evidence="2">
    <location>
        <position position="8"/>
    </location>
</feature>
<comment type="function">
    <text evidence="1">Inhibitor of the proliferation of hepatic stellate cells (HSC). Also inhibits the growth of bovine endothelial cells and 3T6 fibroblasts.</text>
</comment>
<sequence>AEPVEPWS</sequence>
<keyword id="KW-0903">Direct protein sequencing</keyword>
<keyword id="KW-1185">Reference proteome</keyword>
<reference evidence="3" key="1">
    <citation type="journal article" date="2000" name="J. Biochem.">
        <title>Purification and characterization of a novel inhibitor of the proliferation of hepatic stellate cells.</title>
        <authorList>
            <person name="Kim K.-Y."/>
            <person name="Choi I."/>
            <person name="Kim S.-S."/>
        </authorList>
    </citation>
    <scope>PROTEIN SEQUENCE</scope>
    <scope>FUNCTION</scope>
    <source>
        <strain evidence="1">Sprague-Dawley</strain>
        <tissue evidence="1">Liver</tissue>
    </source>
</reference>
<dbReference type="InParanoid" id="P82598"/>
<dbReference type="Proteomes" id="UP000002494">
    <property type="component" value="Unplaced"/>
</dbReference>
<evidence type="ECO:0000269" key="1">
    <source>
    </source>
</evidence>
<evidence type="ECO:0000303" key="2">
    <source>
    </source>
</evidence>
<evidence type="ECO:0000305" key="3"/>